<protein>
    <recommendedName>
        <fullName evidence="1">3-dehydroquinate synthase</fullName>
        <shortName evidence="1">DHQS</shortName>
        <ecNumber evidence="1">4.2.3.4</ecNumber>
    </recommendedName>
</protein>
<keyword id="KW-0028">Amino-acid biosynthesis</keyword>
<keyword id="KW-0057">Aromatic amino acid biosynthesis</keyword>
<keyword id="KW-0170">Cobalt</keyword>
<keyword id="KW-0963">Cytoplasm</keyword>
<keyword id="KW-0456">Lyase</keyword>
<keyword id="KW-0479">Metal-binding</keyword>
<keyword id="KW-0520">NAD</keyword>
<keyword id="KW-0547">Nucleotide-binding</keyword>
<keyword id="KW-0862">Zinc</keyword>
<proteinExistence type="inferred from homology"/>
<accession>Q0BJ01</accession>
<name>AROB_BURCM</name>
<organism>
    <name type="scientific">Burkholderia ambifaria (strain ATCC BAA-244 / DSM 16087 / CCUG 44356 / LMG 19182 / AMMD)</name>
    <name type="common">Burkholderia cepacia (strain AMMD)</name>
    <dbReference type="NCBI Taxonomy" id="339670"/>
    <lineage>
        <taxon>Bacteria</taxon>
        <taxon>Pseudomonadati</taxon>
        <taxon>Pseudomonadota</taxon>
        <taxon>Betaproteobacteria</taxon>
        <taxon>Burkholderiales</taxon>
        <taxon>Burkholderiaceae</taxon>
        <taxon>Burkholderia</taxon>
        <taxon>Burkholderia cepacia complex</taxon>
    </lineage>
</organism>
<feature type="chain" id="PRO_1000094473" description="3-dehydroquinate synthase">
    <location>
        <begin position="1"/>
        <end position="359"/>
    </location>
</feature>
<feature type="binding site" evidence="1">
    <location>
        <begin position="71"/>
        <end position="76"/>
    </location>
    <ligand>
        <name>NAD(+)</name>
        <dbReference type="ChEBI" id="CHEBI:57540"/>
    </ligand>
</feature>
<feature type="binding site" evidence="1">
    <location>
        <begin position="105"/>
        <end position="109"/>
    </location>
    <ligand>
        <name>NAD(+)</name>
        <dbReference type="ChEBI" id="CHEBI:57540"/>
    </ligand>
</feature>
<feature type="binding site" evidence="1">
    <location>
        <begin position="129"/>
        <end position="130"/>
    </location>
    <ligand>
        <name>NAD(+)</name>
        <dbReference type="ChEBI" id="CHEBI:57540"/>
    </ligand>
</feature>
<feature type="binding site" evidence="1">
    <location>
        <position position="142"/>
    </location>
    <ligand>
        <name>NAD(+)</name>
        <dbReference type="ChEBI" id="CHEBI:57540"/>
    </ligand>
</feature>
<feature type="binding site" evidence="1">
    <location>
        <position position="151"/>
    </location>
    <ligand>
        <name>NAD(+)</name>
        <dbReference type="ChEBI" id="CHEBI:57540"/>
    </ligand>
</feature>
<feature type="binding site" evidence="1">
    <location>
        <position position="184"/>
    </location>
    <ligand>
        <name>Zn(2+)</name>
        <dbReference type="ChEBI" id="CHEBI:29105"/>
    </ligand>
</feature>
<feature type="binding site" evidence="1">
    <location>
        <position position="247"/>
    </location>
    <ligand>
        <name>Zn(2+)</name>
        <dbReference type="ChEBI" id="CHEBI:29105"/>
    </ligand>
</feature>
<feature type="binding site" evidence="1">
    <location>
        <position position="264"/>
    </location>
    <ligand>
        <name>Zn(2+)</name>
        <dbReference type="ChEBI" id="CHEBI:29105"/>
    </ligand>
</feature>
<dbReference type="EC" id="4.2.3.4" evidence="1"/>
<dbReference type="EMBL" id="CP000440">
    <property type="protein sequence ID" value="ABI85872.1"/>
    <property type="molecule type" value="Genomic_DNA"/>
</dbReference>
<dbReference type="RefSeq" id="WP_011655777.1">
    <property type="nucleotide sequence ID" value="NC_008390.1"/>
</dbReference>
<dbReference type="SMR" id="Q0BJ01"/>
<dbReference type="GeneID" id="93084273"/>
<dbReference type="KEGG" id="bam:Bamb_0312"/>
<dbReference type="PATRIC" id="fig|339670.21.peg.1307"/>
<dbReference type="eggNOG" id="COG0337">
    <property type="taxonomic scope" value="Bacteria"/>
</dbReference>
<dbReference type="UniPathway" id="UPA00053">
    <property type="reaction ID" value="UER00085"/>
</dbReference>
<dbReference type="Proteomes" id="UP000000662">
    <property type="component" value="Chromosome 1"/>
</dbReference>
<dbReference type="GO" id="GO:0005737">
    <property type="term" value="C:cytoplasm"/>
    <property type="evidence" value="ECO:0007669"/>
    <property type="project" value="UniProtKB-SubCell"/>
</dbReference>
<dbReference type="GO" id="GO:0003856">
    <property type="term" value="F:3-dehydroquinate synthase activity"/>
    <property type="evidence" value="ECO:0007669"/>
    <property type="project" value="UniProtKB-UniRule"/>
</dbReference>
<dbReference type="GO" id="GO:0046872">
    <property type="term" value="F:metal ion binding"/>
    <property type="evidence" value="ECO:0007669"/>
    <property type="project" value="UniProtKB-KW"/>
</dbReference>
<dbReference type="GO" id="GO:0000166">
    <property type="term" value="F:nucleotide binding"/>
    <property type="evidence" value="ECO:0007669"/>
    <property type="project" value="UniProtKB-KW"/>
</dbReference>
<dbReference type="GO" id="GO:0008652">
    <property type="term" value="P:amino acid biosynthetic process"/>
    <property type="evidence" value="ECO:0007669"/>
    <property type="project" value="UniProtKB-KW"/>
</dbReference>
<dbReference type="GO" id="GO:0009073">
    <property type="term" value="P:aromatic amino acid family biosynthetic process"/>
    <property type="evidence" value="ECO:0007669"/>
    <property type="project" value="UniProtKB-KW"/>
</dbReference>
<dbReference type="GO" id="GO:0009423">
    <property type="term" value="P:chorismate biosynthetic process"/>
    <property type="evidence" value="ECO:0007669"/>
    <property type="project" value="UniProtKB-UniRule"/>
</dbReference>
<dbReference type="CDD" id="cd08195">
    <property type="entry name" value="DHQS"/>
    <property type="match status" value="1"/>
</dbReference>
<dbReference type="FunFam" id="3.40.50.1970:FF:000001">
    <property type="entry name" value="3-dehydroquinate synthase"/>
    <property type="match status" value="1"/>
</dbReference>
<dbReference type="Gene3D" id="3.40.50.1970">
    <property type="match status" value="1"/>
</dbReference>
<dbReference type="Gene3D" id="1.20.1090.10">
    <property type="entry name" value="Dehydroquinate synthase-like - alpha domain"/>
    <property type="match status" value="1"/>
</dbReference>
<dbReference type="HAMAP" id="MF_00110">
    <property type="entry name" value="DHQ_synthase"/>
    <property type="match status" value="1"/>
</dbReference>
<dbReference type="InterPro" id="IPR050071">
    <property type="entry name" value="Dehydroquinate_synthase"/>
</dbReference>
<dbReference type="InterPro" id="IPR016037">
    <property type="entry name" value="DHQ_synth_AroB"/>
</dbReference>
<dbReference type="InterPro" id="IPR030963">
    <property type="entry name" value="DHQ_synth_fam"/>
</dbReference>
<dbReference type="InterPro" id="IPR030960">
    <property type="entry name" value="DHQS/DOIS_N"/>
</dbReference>
<dbReference type="InterPro" id="IPR056179">
    <property type="entry name" value="DHQS_C"/>
</dbReference>
<dbReference type="NCBIfam" id="TIGR01357">
    <property type="entry name" value="aroB"/>
    <property type="match status" value="1"/>
</dbReference>
<dbReference type="PANTHER" id="PTHR43622">
    <property type="entry name" value="3-DEHYDROQUINATE SYNTHASE"/>
    <property type="match status" value="1"/>
</dbReference>
<dbReference type="PANTHER" id="PTHR43622:SF7">
    <property type="entry name" value="3-DEHYDROQUINATE SYNTHASE, CHLOROPLASTIC"/>
    <property type="match status" value="1"/>
</dbReference>
<dbReference type="Pfam" id="PF01761">
    <property type="entry name" value="DHQ_synthase"/>
    <property type="match status" value="1"/>
</dbReference>
<dbReference type="Pfam" id="PF24621">
    <property type="entry name" value="DHQS_C"/>
    <property type="match status" value="1"/>
</dbReference>
<dbReference type="PIRSF" id="PIRSF001455">
    <property type="entry name" value="DHQ_synth"/>
    <property type="match status" value="1"/>
</dbReference>
<dbReference type="SUPFAM" id="SSF56796">
    <property type="entry name" value="Dehydroquinate synthase-like"/>
    <property type="match status" value="1"/>
</dbReference>
<comment type="function">
    <text evidence="1">Catalyzes the conversion of 3-deoxy-D-arabino-heptulosonate 7-phosphate (DAHP) to dehydroquinate (DHQ).</text>
</comment>
<comment type="catalytic activity">
    <reaction evidence="1">
        <text>7-phospho-2-dehydro-3-deoxy-D-arabino-heptonate = 3-dehydroquinate + phosphate</text>
        <dbReference type="Rhea" id="RHEA:21968"/>
        <dbReference type="ChEBI" id="CHEBI:32364"/>
        <dbReference type="ChEBI" id="CHEBI:43474"/>
        <dbReference type="ChEBI" id="CHEBI:58394"/>
        <dbReference type="EC" id="4.2.3.4"/>
    </reaction>
</comment>
<comment type="cofactor">
    <cofactor evidence="1">
        <name>Co(2+)</name>
        <dbReference type="ChEBI" id="CHEBI:48828"/>
    </cofactor>
    <cofactor evidence="1">
        <name>Zn(2+)</name>
        <dbReference type="ChEBI" id="CHEBI:29105"/>
    </cofactor>
    <text evidence="1">Binds 1 divalent metal cation per subunit. Can use either Co(2+) or Zn(2+).</text>
</comment>
<comment type="cofactor">
    <cofactor evidence="1">
        <name>NAD(+)</name>
        <dbReference type="ChEBI" id="CHEBI:57540"/>
    </cofactor>
</comment>
<comment type="pathway">
    <text evidence="1">Metabolic intermediate biosynthesis; chorismate biosynthesis; chorismate from D-erythrose 4-phosphate and phosphoenolpyruvate: step 2/7.</text>
</comment>
<comment type="subcellular location">
    <subcellularLocation>
        <location evidence="1">Cytoplasm</location>
    </subcellularLocation>
</comment>
<comment type="similarity">
    <text evidence="1">Belongs to the sugar phosphate cyclases superfamily. Dehydroquinate synthase family.</text>
</comment>
<evidence type="ECO:0000255" key="1">
    <source>
        <dbReference type="HAMAP-Rule" id="MF_00110"/>
    </source>
</evidence>
<gene>
    <name evidence="1" type="primary">aroB</name>
    <name type="ordered locus">Bamb_0312</name>
</gene>
<sequence length="359" mass="37911">MITVNVDLGERAYPIHIGAGLIGRTDLFAPHITGSSVTIVTNTTVDPLYGDALRAALAPLGKRVSTVVLPDGEAYKNWETLNLIFDGLLTERADRKTTLVALGGGVIGDMTGFAAACYMRGVPFIQVPTTLLSQVDSSVGGKTGINHPLGKNMIGAFYQPQAVIADIGALTTLPDRELAAGVAEVIKTGAIADAAFFDWIEANVDALNRREPAALAHAVKRSCEIKASVVAADEREGGLRAILNFGHTFGHAIEAGLGYGEWLHGEAVGCGMVMAADLSVRLGLLDEASRQRLDAVIAAAHLPVRGPALGDARYMELMRVDKKAEAGAIKFILLKRFGDTLITQAPDEAVFATLAQTTR</sequence>
<reference key="1">
    <citation type="submission" date="2006-08" db="EMBL/GenBank/DDBJ databases">
        <title>Complete sequence of chromosome 1 of Burkholderia cepacia AMMD.</title>
        <authorList>
            <person name="Copeland A."/>
            <person name="Lucas S."/>
            <person name="Lapidus A."/>
            <person name="Barry K."/>
            <person name="Detter J.C."/>
            <person name="Glavina del Rio T."/>
            <person name="Hammon N."/>
            <person name="Israni S."/>
            <person name="Pitluck S."/>
            <person name="Bruce D."/>
            <person name="Chain P."/>
            <person name="Malfatti S."/>
            <person name="Shin M."/>
            <person name="Vergez L."/>
            <person name="Schmutz J."/>
            <person name="Larimer F."/>
            <person name="Land M."/>
            <person name="Hauser L."/>
            <person name="Kyrpides N."/>
            <person name="Kim E."/>
            <person name="Parke J."/>
            <person name="Coenye T."/>
            <person name="Konstantinidis K."/>
            <person name="Ramette A."/>
            <person name="Tiedje J."/>
            <person name="Richardson P."/>
        </authorList>
    </citation>
    <scope>NUCLEOTIDE SEQUENCE [LARGE SCALE GENOMIC DNA]</scope>
    <source>
        <strain>ATCC BAA-244 / DSM 16087 / CCUG 44356 / LMG 19182 / AMMD</strain>
    </source>
</reference>